<keyword id="KW-1003">Cell membrane</keyword>
<keyword id="KW-0325">Glycoprotein</keyword>
<keyword id="KW-0406">Ion transport</keyword>
<keyword id="KW-0472">Membrane</keyword>
<keyword id="KW-1185">Reference proteome</keyword>
<keyword id="KW-0732">Signal</keyword>
<keyword id="KW-0812">Transmembrane</keyword>
<keyword id="KW-1133">Transmembrane helix</keyword>
<keyword id="KW-0813">Transport</keyword>
<keyword id="KW-0862">Zinc</keyword>
<keyword id="KW-0864">Zinc transport</keyword>
<dbReference type="EMBL" id="CP017626">
    <property type="protein sequence ID" value="AOW29418.1"/>
    <property type="molecule type" value="Genomic_DNA"/>
</dbReference>
<dbReference type="RefSeq" id="XP_715421.2">
    <property type="nucleotide sequence ID" value="XM_710328.2"/>
</dbReference>
<dbReference type="SMR" id="A0A1D8PMR6"/>
<dbReference type="STRING" id="237561.A0A1D8PMR6"/>
<dbReference type="EnsemblFungi" id="C4_06970C_A-T">
    <property type="protein sequence ID" value="C4_06970C_A-T-p1"/>
    <property type="gene ID" value="C4_06970C_A"/>
</dbReference>
<dbReference type="GeneID" id="3642970"/>
<dbReference type="KEGG" id="cal:CAALFM_C406970CA"/>
<dbReference type="CGD" id="CAL0000176520">
    <property type="gene designation" value="ZRT101"/>
</dbReference>
<dbReference type="VEuPathDB" id="FungiDB:C4_06970C_A"/>
<dbReference type="eggNOG" id="KOG1558">
    <property type="taxonomic scope" value="Eukaryota"/>
</dbReference>
<dbReference type="InParanoid" id="A0A1D8PMR6"/>
<dbReference type="OMA" id="QYTGCHS"/>
<dbReference type="OrthoDB" id="448280at2759"/>
<dbReference type="PHI-base" id="PHI:8104"/>
<dbReference type="Proteomes" id="UP000000559">
    <property type="component" value="Chromosome 4"/>
</dbReference>
<dbReference type="GO" id="GO:0005886">
    <property type="term" value="C:plasma membrane"/>
    <property type="evidence" value="ECO:0000318"/>
    <property type="project" value="GO_Central"/>
</dbReference>
<dbReference type="GO" id="GO:0008270">
    <property type="term" value="F:zinc ion binding"/>
    <property type="evidence" value="ECO:0000314"/>
    <property type="project" value="CGD"/>
</dbReference>
<dbReference type="GO" id="GO:0005385">
    <property type="term" value="F:zinc ion transmembrane transporter activity"/>
    <property type="evidence" value="ECO:0000315"/>
    <property type="project" value="CGD"/>
</dbReference>
<dbReference type="GO" id="GO:0071577">
    <property type="term" value="P:zinc ion transmembrane transport"/>
    <property type="evidence" value="ECO:0000318"/>
    <property type="project" value="GO_Central"/>
</dbReference>
<dbReference type="GO" id="GO:0006829">
    <property type="term" value="P:zinc ion transport"/>
    <property type="evidence" value="ECO:0000315"/>
    <property type="project" value="CGD"/>
</dbReference>
<dbReference type="InterPro" id="IPR003689">
    <property type="entry name" value="ZIP"/>
</dbReference>
<dbReference type="PANTHER" id="PTHR11040:SF44">
    <property type="entry name" value="PROTEIN ZNTC-RELATED"/>
    <property type="match status" value="1"/>
</dbReference>
<dbReference type="PANTHER" id="PTHR11040">
    <property type="entry name" value="ZINC/IRON TRANSPORTER"/>
    <property type="match status" value="1"/>
</dbReference>
<dbReference type="Pfam" id="PF02535">
    <property type="entry name" value="Zip"/>
    <property type="match status" value="1"/>
</dbReference>
<organism>
    <name type="scientific">Candida albicans (strain SC5314 / ATCC MYA-2876)</name>
    <name type="common">Yeast</name>
    <dbReference type="NCBI Taxonomy" id="237561"/>
    <lineage>
        <taxon>Eukaryota</taxon>
        <taxon>Fungi</taxon>
        <taxon>Dikarya</taxon>
        <taxon>Ascomycota</taxon>
        <taxon>Saccharomycotina</taxon>
        <taxon>Pichiomycetes</taxon>
        <taxon>Debaryomycetaceae</taxon>
        <taxon>Candida/Lodderomyces clade</taxon>
        <taxon>Candida</taxon>
    </lineage>
</organism>
<reference key="1">
    <citation type="journal article" date="2004" name="Proc. Natl. Acad. Sci. U.S.A.">
        <title>The diploid genome sequence of Candida albicans.</title>
        <authorList>
            <person name="Jones T."/>
            <person name="Federspiel N.A."/>
            <person name="Chibana H."/>
            <person name="Dungan J."/>
            <person name="Kalman S."/>
            <person name="Magee B.B."/>
            <person name="Newport G."/>
            <person name="Thorstenson Y.R."/>
            <person name="Agabian N."/>
            <person name="Magee P.T."/>
            <person name="Davis R.W."/>
            <person name="Scherer S."/>
        </authorList>
    </citation>
    <scope>NUCLEOTIDE SEQUENCE [LARGE SCALE GENOMIC DNA]</scope>
    <source>
        <strain>SC5314 / ATCC MYA-2876</strain>
    </source>
</reference>
<reference key="2">
    <citation type="journal article" date="2007" name="Genome Biol.">
        <title>Assembly of the Candida albicans genome into sixteen supercontigs aligned on the eight chromosomes.</title>
        <authorList>
            <person name="van het Hoog M."/>
            <person name="Rast T.J."/>
            <person name="Martchenko M."/>
            <person name="Grindle S."/>
            <person name="Dignard D."/>
            <person name="Hogues H."/>
            <person name="Cuomo C."/>
            <person name="Berriman M."/>
            <person name="Scherer S."/>
            <person name="Magee B.B."/>
            <person name="Whiteway M."/>
            <person name="Chibana H."/>
            <person name="Nantel A."/>
            <person name="Magee P.T."/>
        </authorList>
    </citation>
    <scope>GENOME REANNOTATION</scope>
    <source>
        <strain>SC5314 / ATCC MYA-2876</strain>
    </source>
</reference>
<reference key="3">
    <citation type="journal article" date="2013" name="Genome Biol.">
        <title>Assembly of a phased diploid Candida albicans genome facilitates allele-specific measurements and provides a simple model for repeat and indel structure.</title>
        <authorList>
            <person name="Muzzey D."/>
            <person name="Schwartz K."/>
            <person name="Weissman J.S."/>
            <person name="Sherlock G."/>
        </authorList>
    </citation>
    <scope>NUCLEOTIDE SEQUENCE [LARGE SCALE GENOMIC DNA]</scope>
    <scope>GENOME REANNOTATION</scope>
    <source>
        <strain>SC5314 / ATCC MYA-2876</strain>
    </source>
</reference>
<reference key="4">
    <citation type="journal article" date="2004" name="Mol. Microbiol.">
        <title>Transcriptional profiling in Candida albicans reveals new adaptive responses to extracellular pH and functions for Rim101p.</title>
        <authorList>
            <person name="Bensen E.S."/>
            <person name="Martin S.J."/>
            <person name="Li M."/>
            <person name="Berman J."/>
            <person name="Davis D.A."/>
        </authorList>
    </citation>
    <scope>FUNCTION</scope>
    <scope>INDUCTION</scope>
</reference>
<reference key="5">
    <citation type="journal article" date="2005" name="Biochem. Biophys. Res. Commun.">
        <title>Candida albicans protein analysis during hyphal differentiation using an integrative HA-tagging method.</title>
        <authorList>
            <person name="Lee K.H."/>
            <person name="Jun S."/>
            <person name="Hur H.S."/>
            <person name="Ryu J.J."/>
            <person name="Kim J."/>
        </authorList>
    </citation>
    <scope>INDUCTION</scope>
</reference>
<reference key="6">
    <citation type="journal article" date="2005" name="FEMS Microbiol. Lett.">
        <title>DNA array analysis of Candida albicans gene expression in response to adherence to polystyrene.</title>
        <authorList>
            <person name="Marchais V."/>
            <person name="Kempf M."/>
            <person name="Licznar P."/>
            <person name="Lefrancois C."/>
            <person name="Bouchara J.P."/>
            <person name="Robert R."/>
            <person name="Cottin J."/>
        </authorList>
    </citation>
    <scope>INDUCTION</scope>
</reference>
<reference key="7">
    <citation type="journal article" date="2012" name="Eukaryot. Cell">
        <title>Divergent targets of Candida albicans biofilm regulator Bcr1 in vitro and in vivo.</title>
        <authorList>
            <person name="Fanning S."/>
            <person name="Xu W."/>
            <person name="Solis N."/>
            <person name="Woolford C.A."/>
            <person name="Filler S.G."/>
            <person name="Mitchell A.P."/>
        </authorList>
    </citation>
    <scope>INDUCTION</scope>
</reference>
<reference key="8">
    <citation type="journal article" date="2012" name="Cell">
        <title>A recently evolved transcriptional network controls biofilm development in Candida albicans.</title>
        <authorList>
            <person name="Nobile C.J."/>
            <person name="Fox E.P."/>
            <person name="Nett J.E."/>
            <person name="Sorrells T.R."/>
            <person name="Mitrovich Q.M."/>
            <person name="Hernday A.D."/>
            <person name="Tuch B.B."/>
            <person name="Andes D.R."/>
            <person name="Johnson A.D."/>
        </authorList>
    </citation>
    <scope>INDUCTION</scope>
</reference>
<reference key="9">
    <citation type="journal article" date="2012" name="PLoS Pathog.">
        <title>Candida albicans scavenges host zinc via Pra1 during endothelial invasion.</title>
        <authorList>
            <person name="Citiulo F."/>
            <person name="Jacobsen I.D."/>
            <person name="Miramon P."/>
            <person name="Schild L."/>
            <person name="Brunke S."/>
            <person name="Zipfel P."/>
            <person name="Brock M."/>
            <person name="Hube B."/>
            <person name="Wilson D."/>
        </authorList>
    </citation>
    <scope>FUNCTION</scope>
    <scope>INTERACTION WITH PRA1</scope>
    <scope>SUBCELLULAR LOCATION</scope>
    <scope>TRANSPORTER ACTIVITY</scope>
    <scope>DISRUPTION PHENOTYPE</scope>
</reference>
<comment type="function">
    <text evidence="3 8">Zinc transporter that acts with PRA1 in sequestration of zinc from host tissues during infection (PubMed:15554973, PubMed:22761575). The pH-regulated antigen 1 (PRA1) binds zinc from its environment and then reassociates with ZRT1 to acquire this essential metal (PubMed:22761575).</text>
</comment>
<comment type="catalytic activity">
    <reaction evidence="8">
        <text>Zn(2+)(in) = Zn(2+)(out)</text>
        <dbReference type="Rhea" id="RHEA:29351"/>
        <dbReference type="ChEBI" id="CHEBI:29105"/>
    </reaction>
    <physiologicalReaction direction="right-to-left" evidence="8">
        <dbReference type="Rhea" id="RHEA:29353"/>
    </physiologicalReaction>
</comment>
<comment type="subcellular location">
    <subcellularLocation>
        <location evidence="8">Cell membrane</location>
        <topology evidence="1">Multi-pass membrane protein</topology>
    </subcellularLocation>
</comment>
<comment type="induction">
    <text evidence="3 4 5 6 7">Expression is RIM101-dependent and up-regulated in alkaline conditions (PubMed:15554973). The promoter contains 2 RIM101 binding sites 5'-GCCAAG-3' (PubMed:15554973). Expression is induced by macrophages during oralpharyngeal candidasis infection (PubMed:22544909). Expression is also increased during hyphal transition, biofilm formation and surface adherence (PubMed:15796975, PubMed:16212935, PubMed:22265407).</text>
</comment>
<comment type="disruption phenotype">
    <text evidence="8">Leads to poor growth in the absence of exogenous zinc and impairs assimilation of zinc from host cells.</text>
</comment>
<comment type="similarity">
    <text evidence="10">Belongs to the ZIP transporter (TC 2.A.5) family.</text>
</comment>
<feature type="signal peptide" evidence="1">
    <location>
        <begin position="1"/>
        <end position="17"/>
    </location>
</feature>
<feature type="chain" id="PRO_5009111173" description="Zinc-regulated transporter 1" evidence="1">
    <location>
        <begin position="18"/>
        <end position="468"/>
    </location>
</feature>
<feature type="topological domain" description="Extracellular" evidence="10">
    <location>
        <begin position="18"/>
        <end position="185"/>
    </location>
</feature>
<feature type="transmembrane region" description="Helical" evidence="1">
    <location>
        <begin position="186"/>
        <end position="206"/>
    </location>
</feature>
<feature type="topological domain" description="Cytoplasmic" evidence="10">
    <location>
        <begin position="207"/>
        <end position="217"/>
    </location>
</feature>
<feature type="transmembrane region" description="Helical" evidence="1">
    <location>
        <begin position="218"/>
        <end position="238"/>
    </location>
</feature>
<feature type="topological domain" description="Extracellular" evidence="10">
    <location>
        <begin position="239"/>
        <end position="257"/>
    </location>
</feature>
<feature type="transmembrane region" description="Helical" evidence="1">
    <location>
        <begin position="258"/>
        <end position="278"/>
    </location>
</feature>
<feature type="topological domain" description="Cytoplasmic" evidence="10">
    <location>
        <begin position="279"/>
        <end position="314"/>
    </location>
</feature>
<feature type="transmembrane region" description="Helical" evidence="1">
    <location>
        <begin position="315"/>
        <end position="335"/>
    </location>
</feature>
<feature type="topological domain" description="Extracellular" evidence="10">
    <location>
        <begin position="336"/>
        <end position="338"/>
    </location>
</feature>
<feature type="transmembrane region" description="Helical" evidence="1">
    <location>
        <begin position="339"/>
        <end position="359"/>
    </location>
</feature>
<feature type="topological domain" description="Cytoplasmic" evidence="10">
    <location>
        <begin position="360"/>
        <end position="374"/>
    </location>
</feature>
<feature type="transmembrane region" description="Helical" evidence="1">
    <location>
        <begin position="375"/>
        <end position="395"/>
    </location>
</feature>
<feature type="topological domain" description="Extracellular" evidence="10">
    <location>
        <begin position="396"/>
        <end position="406"/>
    </location>
</feature>
<feature type="transmembrane region" description="Helical" evidence="1">
    <location>
        <begin position="407"/>
        <end position="427"/>
    </location>
</feature>
<feature type="topological domain" description="Cytoplasmic" evidence="10">
    <location>
        <begin position="428"/>
        <end position="447"/>
    </location>
</feature>
<feature type="transmembrane region" description="Helical" evidence="1">
    <location>
        <begin position="448"/>
        <end position="468"/>
    </location>
</feature>
<feature type="glycosylation site" description="N-linked (GlcNAc...) asparagine" evidence="2">
    <location>
        <position position="57"/>
    </location>
</feature>
<feature type="glycosylation site" description="N-linked (GlcNAc...) asparagine" evidence="2">
    <location>
        <position position="67"/>
    </location>
</feature>
<proteinExistence type="evidence at protein level"/>
<protein>
    <recommendedName>
        <fullName evidence="9">Zinc-regulated transporter 1</fullName>
    </recommendedName>
</protein>
<evidence type="ECO:0000255" key="1"/>
<evidence type="ECO:0000255" key="2">
    <source>
        <dbReference type="PROSITE-ProRule" id="PRU00498"/>
    </source>
</evidence>
<evidence type="ECO:0000269" key="3">
    <source>
    </source>
</evidence>
<evidence type="ECO:0000269" key="4">
    <source>
    </source>
</evidence>
<evidence type="ECO:0000269" key="5">
    <source>
    </source>
</evidence>
<evidence type="ECO:0000269" key="6">
    <source>
    </source>
</evidence>
<evidence type="ECO:0000269" key="7">
    <source>
    </source>
</evidence>
<evidence type="ECO:0000269" key="8">
    <source>
    </source>
</evidence>
<evidence type="ECO:0000303" key="9">
    <source>
    </source>
</evidence>
<evidence type="ECO:0000305" key="10"/>
<sequence length="468" mass="51206">MKFTHLFFIGLLTKVYTETVTVLSTRSYRLATTESTPTDGTVYLTLTRQQSSSTSLNASTITTPPSNSSASVQTTAVTDCHFHNSVQYCVDGYGNEGSILPVPTNTNNLPTSYDGCHSHDGDTFCMDGDKEVQFVKLEDEDDEESSSSSGKKCHFHAGVEHCVDDNNHDAVTCERVKRDYDIPLRIGLLFVILVTSGIGSFGPIVLKQFVNLSQENYIIVIIKQFGTGIIISTAFVHLMTHAQLMWSNSCLKIKYEGTGASITMAGIFIAFIIEYIALRIVNARDTGKVDKKEIEETSSNEQSLHGISVNDKISVMILEAGIIFHSILIGITLVVTDDVYFITLFIVIVFHQFFEGLALSSRIISITNASLSTKLVMALMFALITPIGMAIGIGVLNKFNGNDPSTLIALGTLDSFSAGVLLWTGLIEMWSHDWLHGHLRNSSFVKTTVALVSLILGMLLMSLLGNWA</sequence>
<gene>
    <name type="primary">ZRT101</name>
    <name evidence="9" type="synonym">ZRT1</name>
    <name type="ordered locus">CAALFM_C406970CA</name>
    <name type="ordered locus">orf19.10624</name>
</gene>
<name>ZRT1_CANAL</name>
<accession>A0A1D8PMR6</accession>